<reference key="1">
    <citation type="journal article" date="2002" name="Nature">
        <title>The genome sequence of Schizosaccharomyces pombe.</title>
        <authorList>
            <person name="Wood V."/>
            <person name="Gwilliam R."/>
            <person name="Rajandream M.A."/>
            <person name="Lyne M.H."/>
            <person name="Lyne R."/>
            <person name="Stewart A."/>
            <person name="Sgouros J.G."/>
            <person name="Peat N."/>
            <person name="Hayles J."/>
            <person name="Baker S.G."/>
            <person name="Basham D."/>
            <person name="Bowman S."/>
            <person name="Brooks K."/>
            <person name="Brown D."/>
            <person name="Brown S."/>
            <person name="Chillingworth T."/>
            <person name="Churcher C.M."/>
            <person name="Collins M."/>
            <person name="Connor R."/>
            <person name="Cronin A."/>
            <person name="Davis P."/>
            <person name="Feltwell T."/>
            <person name="Fraser A."/>
            <person name="Gentles S."/>
            <person name="Goble A."/>
            <person name="Hamlin N."/>
            <person name="Harris D.E."/>
            <person name="Hidalgo J."/>
            <person name="Hodgson G."/>
            <person name="Holroyd S."/>
            <person name="Hornsby T."/>
            <person name="Howarth S."/>
            <person name="Huckle E.J."/>
            <person name="Hunt S."/>
            <person name="Jagels K."/>
            <person name="James K.D."/>
            <person name="Jones L."/>
            <person name="Jones M."/>
            <person name="Leather S."/>
            <person name="McDonald S."/>
            <person name="McLean J."/>
            <person name="Mooney P."/>
            <person name="Moule S."/>
            <person name="Mungall K.L."/>
            <person name="Murphy L.D."/>
            <person name="Niblett D."/>
            <person name="Odell C."/>
            <person name="Oliver K."/>
            <person name="O'Neil S."/>
            <person name="Pearson D."/>
            <person name="Quail M.A."/>
            <person name="Rabbinowitsch E."/>
            <person name="Rutherford K.M."/>
            <person name="Rutter S."/>
            <person name="Saunders D."/>
            <person name="Seeger K."/>
            <person name="Sharp S."/>
            <person name="Skelton J."/>
            <person name="Simmonds M.N."/>
            <person name="Squares R."/>
            <person name="Squares S."/>
            <person name="Stevens K."/>
            <person name="Taylor K."/>
            <person name="Taylor R.G."/>
            <person name="Tivey A."/>
            <person name="Walsh S.V."/>
            <person name="Warren T."/>
            <person name="Whitehead S."/>
            <person name="Woodward J.R."/>
            <person name="Volckaert G."/>
            <person name="Aert R."/>
            <person name="Robben J."/>
            <person name="Grymonprez B."/>
            <person name="Weltjens I."/>
            <person name="Vanstreels E."/>
            <person name="Rieger M."/>
            <person name="Schaefer M."/>
            <person name="Mueller-Auer S."/>
            <person name="Gabel C."/>
            <person name="Fuchs M."/>
            <person name="Duesterhoeft A."/>
            <person name="Fritzc C."/>
            <person name="Holzer E."/>
            <person name="Moestl D."/>
            <person name="Hilbert H."/>
            <person name="Borzym K."/>
            <person name="Langer I."/>
            <person name="Beck A."/>
            <person name="Lehrach H."/>
            <person name="Reinhardt R."/>
            <person name="Pohl T.M."/>
            <person name="Eger P."/>
            <person name="Zimmermann W."/>
            <person name="Wedler H."/>
            <person name="Wambutt R."/>
            <person name="Purnelle B."/>
            <person name="Goffeau A."/>
            <person name="Cadieu E."/>
            <person name="Dreano S."/>
            <person name="Gloux S."/>
            <person name="Lelaure V."/>
            <person name="Mottier S."/>
            <person name="Galibert F."/>
            <person name="Aves S.J."/>
            <person name="Xiang Z."/>
            <person name="Hunt C."/>
            <person name="Moore K."/>
            <person name="Hurst S.M."/>
            <person name="Lucas M."/>
            <person name="Rochet M."/>
            <person name="Gaillardin C."/>
            <person name="Tallada V.A."/>
            <person name="Garzon A."/>
            <person name="Thode G."/>
            <person name="Daga R.R."/>
            <person name="Cruzado L."/>
            <person name="Jimenez J."/>
            <person name="Sanchez M."/>
            <person name="del Rey F."/>
            <person name="Benito J."/>
            <person name="Dominguez A."/>
            <person name="Revuelta J.L."/>
            <person name="Moreno S."/>
            <person name="Armstrong J."/>
            <person name="Forsburg S.L."/>
            <person name="Cerutti L."/>
            <person name="Lowe T."/>
            <person name="McCombie W.R."/>
            <person name="Paulsen I."/>
            <person name="Potashkin J."/>
            <person name="Shpakovski G.V."/>
            <person name="Ussery D."/>
            <person name="Barrell B.G."/>
            <person name="Nurse P."/>
        </authorList>
    </citation>
    <scope>NUCLEOTIDE SEQUENCE [LARGE SCALE GENOMIC DNA]</scope>
    <source>
        <strain>972 / ATCC 24843</strain>
    </source>
</reference>
<dbReference type="EMBL" id="CU329670">
    <property type="protein sequence ID" value="CAA90496.1"/>
    <property type="molecule type" value="Genomic_DNA"/>
</dbReference>
<dbReference type="PIR" id="T38557">
    <property type="entry name" value="S58153"/>
</dbReference>
<dbReference type="BioGRID" id="278372">
    <property type="interactions" value="4"/>
</dbReference>
<dbReference type="FunCoup" id="Q09700">
    <property type="interactions" value="197"/>
</dbReference>
<dbReference type="STRING" id="284812.Q09700"/>
<dbReference type="PaxDb" id="4896-SPAC2F7.09c.1"/>
<dbReference type="EnsemblFungi" id="SPAC2F7.09c.1">
    <property type="protein sequence ID" value="SPAC2F7.09c.1:pep"/>
    <property type="gene ID" value="SPAC2F7.09c"/>
</dbReference>
<dbReference type="KEGG" id="spo:2541882"/>
<dbReference type="PomBase" id="SPAC2F7.09c"/>
<dbReference type="VEuPathDB" id="FungiDB:SPAC2F7.09c"/>
<dbReference type="eggNOG" id="ENOG502S067">
    <property type="taxonomic scope" value="Eukaryota"/>
</dbReference>
<dbReference type="HOGENOM" id="CLU_555699_0_0_1"/>
<dbReference type="InParanoid" id="Q09700"/>
<dbReference type="OMA" id="RCHDIKF"/>
<dbReference type="PhylomeDB" id="Q09700"/>
<dbReference type="PRO" id="PR:Q09700"/>
<dbReference type="Proteomes" id="UP000002485">
    <property type="component" value="Chromosome I"/>
</dbReference>
<dbReference type="GO" id="GO:0005737">
    <property type="term" value="C:cytoplasm"/>
    <property type="evidence" value="ECO:0007005"/>
    <property type="project" value="PomBase"/>
</dbReference>
<dbReference type="GO" id="GO:0005739">
    <property type="term" value="C:mitochondrion"/>
    <property type="evidence" value="ECO:0000318"/>
    <property type="project" value="GO_Central"/>
</dbReference>
<dbReference type="GO" id="GO:0005525">
    <property type="term" value="F:GTP binding"/>
    <property type="evidence" value="ECO:0007669"/>
    <property type="project" value="InterPro"/>
</dbReference>
<dbReference type="GO" id="GO:0061668">
    <property type="term" value="P:mitochondrial ribosome assembly"/>
    <property type="evidence" value="ECO:0000266"/>
    <property type="project" value="PomBase"/>
</dbReference>
<dbReference type="CDD" id="cd01855">
    <property type="entry name" value="YqeH"/>
    <property type="match status" value="1"/>
</dbReference>
<dbReference type="Gene3D" id="3.40.50.300">
    <property type="entry name" value="P-loop containing nucleotide triphosphate hydrolases"/>
    <property type="match status" value="1"/>
</dbReference>
<dbReference type="InterPro" id="IPR006073">
    <property type="entry name" value="GTP-bd"/>
</dbReference>
<dbReference type="InterPro" id="IPR050896">
    <property type="entry name" value="Mito_lipid_metab_GTPase"/>
</dbReference>
<dbReference type="InterPro" id="IPR027417">
    <property type="entry name" value="P-loop_NTPase"/>
</dbReference>
<dbReference type="PANTHER" id="PTHR46434">
    <property type="entry name" value="GENETIC INTERACTOR OF PROHIBITINS 3, MITOCHONDRIAL"/>
    <property type="match status" value="1"/>
</dbReference>
<dbReference type="PANTHER" id="PTHR46434:SF1">
    <property type="entry name" value="GENETIC INTERACTOR OF PROHIBITINS 3, MITOCHONDRIAL"/>
    <property type="match status" value="1"/>
</dbReference>
<dbReference type="Pfam" id="PF01926">
    <property type="entry name" value="MMR_HSR1"/>
    <property type="match status" value="1"/>
</dbReference>
<dbReference type="SUPFAM" id="SSF52540">
    <property type="entry name" value="P-loop containing nucleoside triphosphate hydrolases"/>
    <property type="match status" value="1"/>
</dbReference>
<keyword id="KW-1185">Reference proteome</keyword>
<sequence length="491" mass="55052">MSFTKFCRGCGQTLQSANESATGYIKPLKLSGIFSKGSVSNLLKKNLDEQAIFNNAFKNLNPQIKKHFPNTTSFPFHEKEIGRTDLLWCQRCHDLKFHSRIRPKELLQEPQTTLPDIISTVNNDKSTCLIIQVIDVTEVIFQDFVSATQYTHFPVFHLFTHADVLPPKKPYWLFPGLGISSKYAMLYTSHSFNLVDKLLGRINPLLCSRGHVYVVGEANSGKSTLLKTLAKRGNGVFNELLLDSFLPGTTQAIKGYPTQYFGSCFKQLSEGLIFDTPGYRGNLKSLLPWVDTKLLTSLVPKTRSRNKQLTSKPVQYRVRFGQSIILGGLVRVTPFEINEDGNHEVGKPIMFKKEDPSSTTIHFLFSTLKNKKTKGNTNNMKPLLIKLFTKLPAHITSITKLQSLENSTKNDNVPLVTHSPSPMHSSFTVSIKPTQLSENVFDPTSSGELVIHNFGFLSFSASRPMNLLVESVNPKAVSWRSAKPVVPKFNK</sequence>
<organism>
    <name type="scientific">Schizosaccharomyces pombe (strain 972 / ATCC 24843)</name>
    <name type="common">Fission yeast</name>
    <dbReference type="NCBI Taxonomy" id="284812"/>
    <lineage>
        <taxon>Eukaryota</taxon>
        <taxon>Fungi</taxon>
        <taxon>Dikarya</taxon>
        <taxon>Ascomycota</taxon>
        <taxon>Taphrinomycotina</taxon>
        <taxon>Schizosaccharomycetes</taxon>
        <taxon>Schizosaccharomycetales</taxon>
        <taxon>Schizosaccharomycetaceae</taxon>
        <taxon>Schizosaccharomyces</taxon>
    </lineage>
</organism>
<proteinExistence type="predicted"/>
<accession>Q09700</accession>
<feature type="chain" id="PRO_0000116384" description="Uncharacterized protein C2F7.09c">
    <location>
        <begin position="1"/>
        <end position="491"/>
    </location>
</feature>
<protein>
    <recommendedName>
        <fullName>Uncharacterized protein C2F7.09c</fullName>
    </recommendedName>
</protein>
<gene>
    <name type="ORF">SPAC2F7.09c</name>
</gene>
<name>YA29_SCHPO</name>